<name>YSAB_SALTI</name>
<reference key="1">
    <citation type="journal article" date="2001" name="Nature">
        <title>Complete genome sequence of a multiple drug resistant Salmonella enterica serovar Typhi CT18.</title>
        <authorList>
            <person name="Parkhill J."/>
            <person name="Dougan G."/>
            <person name="James K.D."/>
            <person name="Thomson N.R."/>
            <person name="Pickard D."/>
            <person name="Wain J."/>
            <person name="Churcher C.M."/>
            <person name="Mungall K.L."/>
            <person name="Bentley S.D."/>
            <person name="Holden M.T.G."/>
            <person name="Sebaihia M."/>
            <person name="Baker S."/>
            <person name="Basham D."/>
            <person name="Brooks K."/>
            <person name="Chillingworth T."/>
            <person name="Connerton P."/>
            <person name="Cronin A."/>
            <person name="Davis P."/>
            <person name="Davies R.M."/>
            <person name="Dowd L."/>
            <person name="White N."/>
            <person name="Farrar J."/>
            <person name="Feltwell T."/>
            <person name="Hamlin N."/>
            <person name="Haque A."/>
            <person name="Hien T.T."/>
            <person name="Holroyd S."/>
            <person name="Jagels K."/>
            <person name="Krogh A."/>
            <person name="Larsen T.S."/>
            <person name="Leather S."/>
            <person name="Moule S."/>
            <person name="O'Gaora P."/>
            <person name="Parry C."/>
            <person name="Quail M.A."/>
            <person name="Rutherford K.M."/>
            <person name="Simmonds M."/>
            <person name="Skelton J."/>
            <person name="Stevens K."/>
            <person name="Whitehead S."/>
            <person name="Barrell B.G."/>
        </authorList>
    </citation>
    <scope>NUCLEOTIDE SEQUENCE [LARGE SCALE GENOMIC DNA]</scope>
    <source>
        <strain>CT18</strain>
    </source>
</reference>
<reference key="2">
    <citation type="journal article" date="2003" name="J. Bacteriol.">
        <title>Comparative genomics of Salmonella enterica serovar Typhi strains Ty2 and CT18.</title>
        <authorList>
            <person name="Deng W."/>
            <person name="Liou S.-R."/>
            <person name="Plunkett G. III"/>
            <person name="Mayhew G.F."/>
            <person name="Rose D.J."/>
            <person name="Burland V."/>
            <person name="Kodoyianni V."/>
            <person name="Schwartz D.C."/>
            <person name="Blattner F.R."/>
        </authorList>
    </citation>
    <scope>NUCLEOTIDE SEQUENCE [LARGE SCALE GENOMIC DNA]</scope>
    <source>
        <strain>ATCC 700931 / Ty2</strain>
    </source>
</reference>
<keyword id="KW-1003">Cell membrane</keyword>
<keyword id="KW-0449">Lipoprotein</keyword>
<keyword id="KW-0472">Membrane</keyword>
<keyword id="KW-0564">Palmitate</keyword>
<keyword id="KW-0732">Signal</keyword>
<feature type="signal peptide" evidence="1">
    <location>
        <begin position="1"/>
        <end position="17"/>
    </location>
</feature>
<feature type="chain" id="PRO_0000268615" description="Uncharacterized lipoprotein YsaB">
    <location>
        <begin position="18"/>
        <end position="100"/>
    </location>
</feature>
<feature type="lipid moiety-binding region" description="N-palmitoyl cysteine" evidence="1">
    <location>
        <position position="18"/>
    </location>
</feature>
<feature type="lipid moiety-binding region" description="S-diacylglycerol cysteine" evidence="1">
    <location>
        <position position="18"/>
    </location>
</feature>
<protein>
    <recommendedName>
        <fullName>Uncharacterized lipoprotein YsaB</fullName>
    </recommendedName>
</protein>
<evidence type="ECO:0000255" key="1">
    <source>
        <dbReference type="PROSITE-ProRule" id="PRU00303"/>
    </source>
</evidence>
<gene>
    <name type="primary">ysaB</name>
    <name type="ordered locus">STY4142</name>
    <name type="ordered locus">t3862</name>
</gene>
<dbReference type="EMBL" id="AL513382">
    <property type="protein sequence ID" value="CAD07971.1"/>
    <property type="molecule type" value="Genomic_DNA"/>
</dbReference>
<dbReference type="EMBL" id="AE014613">
    <property type="protein sequence ID" value="AAO71341.1"/>
    <property type="molecule type" value="Genomic_DNA"/>
</dbReference>
<dbReference type="RefSeq" id="NP_458269.1">
    <property type="nucleotide sequence ID" value="NC_003198.1"/>
</dbReference>
<dbReference type="RefSeq" id="WP_000605592.1">
    <property type="nucleotide sequence ID" value="NZ_WSUR01000001.1"/>
</dbReference>
<dbReference type="STRING" id="220341.gene:17587983"/>
<dbReference type="KEGG" id="stt:t3862"/>
<dbReference type="KEGG" id="sty:STY4142"/>
<dbReference type="PATRIC" id="fig|220341.7.peg.4232"/>
<dbReference type="eggNOG" id="ENOG5032T4W">
    <property type="taxonomic scope" value="Bacteria"/>
</dbReference>
<dbReference type="HOGENOM" id="CLU_162515_0_0_6"/>
<dbReference type="OMA" id="FICSFDP"/>
<dbReference type="OrthoDB" id="6563049at2"/>
<dbReference type="Proteomes" id="UP000000541">
    <property type="component" value="Chromosome"/>
</dbReference>
<dbReference type="Proteomes" id="UP000002670">
    <property type="component" value="Chromosome"/>
</dbReference>
<dbReference type="GO" id="GO:0005886">
    <property type="term" value="C:plasma membrane"/>
    <property type="evidence" value="ECO:0007669"/>
    <property type="project" value="UniProtKB-SubCell"/>
</dbReference>
<dbReference type="InterPro" id="IPR025728">
    <property type="entry name" value="YsaB-like"/>
</dbReference>
<dbReference type="Pfam" id="PF13983">
    <property type="entry name" value="YsaB"/>
    <property type="match status" value="1"/>
</dbReference>
<dbReference type="PROSITE" id="PS51257">
    <property type="entry name" value="PROKAR_LIPOPROTEIN"/>
    <property type="match status" value="1"/>
</dbReference>
<organism>
    <name type="scientific">Salmonella typhi</name>
    <dbReference type="NCBI Taxonomy" id="90370"/>
    <lineage>
        <taxon>Bacteria</taxon>
        <taxon>Pseudomonadati</taxon>
        <taxon>Pseudomonadota</taxon>
        <taxon>Gammaproteobacteria</taxon>
        <taxon>Enterobacterales</taxon>
        <taxon>Enterobacteriaceae</taxon>
        <taxon>Salmonella</taxon>
    </lineage>
</organism>
<sequence>MIMKYFCTVMIAIALVGCTATPPPTQKAQQSKVSPTRTLDMEALCKAQAAQRYNTGAQKIAVTGFEQFQGSYEMRGNTFRKESFVCSFDADGQFLHLSMR</sequence>
<proteinExistence type="inferred from homology"/>
<comment type="subcellular location">
    <subcellularLocation>
        <location evidence="1">Cell membrane</location>
        <topology evidence="1">Lipid-anchor</topology>
    </subcellularLocation>
</comment>
<accession>Q8Z2B5</accession>
<accession>Q7C635</accession>